<reference key="1">
    <citation type="submission" date="2006-01" db="EMBL/GenBank/DDBJ databases">
        <title>NISC comparative sequencing initiative.</title>
        <authorList>
            <person name="Antonellis A."/>
            <person name="Ayele K."/>
            <person name="Benjamin B."/>
            <person name="Blakesley R.W."/>
            <person name="Boakye A."/>
            <person name="Bouffard G.G."/>
            <person name="Brinkley C."/>
            <person name="Brooks S."/>
            <person name="Chu G."/>
            <person name="Coleman H."/>
            <person name="Engle J."/>
            <person name="Gestole M."/>
            <person name="Greene A."/>
            <person name="Guan X."/>
            <person name="Gupta J."/>
            <person name="Haghighi P."/>
            <person name="Han J."/>
            <person name="Hansen N."/>
            <person name="Ho S.-L."/>
            <person name="Hu P."/>
            <person name="Hunter G."/>
            <person name="Hurle B."/>
            <person name="Idol J.R."/>
            <person name="Kwong P."/>
            <person name="Laric P."/>
            <person name="Larson S."/>
            <person name="Lee-Lin S.-Q."/>
            <person name="Legaspi R."/>
            <person name="Madden M."/>
            <person name="Maduro Q.L."/>
            <person name="Maduro V.B."/>
            <person name="Margulies E.H."/>
            <person name="Masiello C."/>
            <person name="Maskeri B."/>
            <person name="McDowell J."/>
            <person name="Mojidi H.A."/>
            <person name="Mullikin J.C."/>
            <person name="Oestreicher J.S."/>
            <person name="Park M."/>
            <person name="Portnoy M.E."/>
            <person name="Prasad A."/>
            <person name="Puri O."/>
            <person name="Reddix-Dugue N."/>
            <person name="Schandler K."/>
            <person name="Schueler M.G."/>
            <person name="Sison C."/>
            <person name="Stantripop S."/>
            <person name="Stephen E."/>
            <person name="Taye A."/>
            <person name="Thomas J.W."/>
            <person name="Thomas P.J."/>
            <person name="Tsipouri V."/>
            <person name="Ung L."/>
            <person name="Vogt J.L."/>
            <person name="Wetherby K.D."/>
            <person name="Young A."/>
            <person name="Green E.D."/>
        </authorList>
    </citation>
    <scope>NUCLEOTIDE SEQUENCE [LARGE SCALE GENOMIC DNA]</scope>
</reference>
<sequence length="1662" mass="180999">MATDGASCEPDLSRAPEDAAGAAAEAAKKEFDVDTLSKSELRMLLSVMEGELEARDLVIEALRARRKEVFIQERYGRFNLNDPFLALQRDYEAGAGDKEKKPVCTNPLSILEAVMAHCKKMQERMSAQLAAAESRQKKLEMEKLQLQALEQEHKKLAARLEEERGKNKQVVLMLVKECKQLSGKVIEEAQKLEDVMAKLEEEKKKTNELEEELSAEKRRSTEMEAQMEKQLSEFDTEREQLRAKLNREEAHTTDLKEEIDKMKKMIEQLKRGSDSKPSLSLPRKTKDRRLVSISVGTEGTVTRSVACQTDLVTESADHVKKLPLTMPVKPSTGSPLVSANAKGSVCTSATMARPGIDRQASHSDLIGSSVPAFPPPSANRIEENGPSTDSTPDPTSSTPPLPSNAAPPTTQTPGIAPQNSQAPPMHSLHSPCANASLHPGLNPRIQAARFRFQGNANDPDQNGNTTQSPPSRDMSPTSRDNLVAKQLARNTVTQALSRFTSPQAGAPSRPGAPPTGDVGTHPPVGRTSLKTHGVARVDRGNPPPIPPKKPGLSQTPSPPHPQLKVIIDSSRASNTGAKVDNKTVASPPSSLPQGNRVTNEDNLPKSSSPQLPPKPSIDLTVAPAGCTVSALATSQVGAWPAATPGLNQPACSDSSLVIPTTIAFCSSINPVSASSCRPGASDSLLVTASGWSPSLTPLLMSGGPAPLAGRPTLLQQAAAQGNVTLLSMLLNEEGLDINYSCEDGHSALYSAAKNGHTDCVRLLLSAEAQINAADKNGFTPLCAAAAQGHFECVELLIAYDANINHAADGGQTPLYLACKNENKECIKLLLEAGTNRSVKTTDGWTPVHAAVDTGNVDSLKLLMYHRIPACGNSFNEEESESGVFDLDGGEESPEGIFKPVVPADLINHANREGWTAAHIAASKGFKNCLEILCRHGGLEPERRDKCNRTVHDVATDDCKHLLENLNALKIPLRISVGEIEPSNCGSDDLECENTICALNIRKQTSWDDFSKAVSQALTNHFQAISSDGWWSLEDVTCNNTTDSNIGLSAASIRSITLGNVPWSVGQSFTQSPWDFMRKNKAEHITVLLSGPQEGCLSSVTYASMIPLQMMQNYLRLVEQYHNVIFHGPEGSLQDYIVHQLALCLKHRQMAAGFSCEIVRAEIDAGFSKEQLLDLFISSACLIPVKQSPSKKKIIIILENLEKSSLSELLRDFLAPLENRSTESPCTFQKGNGMSECYYFHENCFLMGTIAKACLQGSDLLVQQHFRWVQLRWDGEPMQGLLQRFLRRKVVNKFKGQAPSPCDPVCKIVDWALSVWRQLNSCLARLGTPEALLGPKYFLSCPVVPGHAQVTVKWMSKLWNGVIAPRVQEAILSRASVKRQPGFGQTTAKRHPSQGQQAVVKAALSILLNKAVLHGCPLPRAELDQHTADFKGGSFPLSIVSSYNSCNKKKGESGAWRKVNTSPRRKSGRFSLPTWNKPDLSTEGIKNKTISQLNYNRNVSLSKQKSLENDLSLTLNLDQRLSLGSDDEADLVKELQSMCSSKSESDISKIADSRDDLRMFDSSGNNPILSATINNLRMPVSQKEVSPLSSHQTTECSNSKSKTELGVSRVKSFLPVPRSKVTLCSQNTKRSSSSSNTRQIEINNNSKENWNLHKNEHLDKPNK</sequence>
<keyword id="KW-0040">ANK repeat</keyword>
<keyword id="KW-0966">Cell projection</keyword>
<keyword id="KW-0175">Coiled coil</keyword>
<keyword id="KW-0963">Cytoplasm</keyword>
<keyword id="KW-0488">Methylation</keyword>
<keyword id="KW-0597">Phosphoprotein</keyword>
<keyword id="KW-0677">Repeat</keyword>
<keyword id="KW-0770">Synapse</keyword>
<gene>
    <name type="primary">CTTNBP2</name>
    <name type="synonym">CORTBP2</name>
</gene>
<accession>Q2IBA2</accession>
<organism>
    <name type="scientific">Chlorocebus aethiops</name>
    <name type="common">Green monkey</name>
    <name type="synonym">Cercopithecus aethiops</name>
    <dbReference type="NCBI Taxonomy" id="9534"/>
    <lineage>
        <taxon>Eukaryota</taxon>
        <taxon>Metazoa</taxon>
        <taxon>Chordata</taxon>
        <taxon>Craniata</taxon>
        <taxon>Vertebrata</taxon>
        <taxon>Euteleostomi</taxon>
        <taxon>Mammalia</taxon>
        <taxon>Eutheria</taxon>
        <taxon>Euarchontoglires</taxon>
        <taxon>Primates</taxon>
        <taxon>Haplorrhini</taxon>
        <taxon>Catarrhini</taxon>
        <taxon>Cercopithecidae</taxon>
        <taxon>Cercopithecinae</taxon>
        <taxon>Chlorocebus</taxon>
    </lineage>
</organism>
<dbReference type="EMBL" id="DP000029">
    <property type="protein sequence ID" value="ABC87492.1"/>
    <property type="molecule type" value="Genomic_DNA"/>
</dbReference>
<dbReference type="SMR" id="Q2IBA2"/>
<dbReference type="GO" id="GO:0015629">
    <property type="term" value="C:actin cytoskeleton"/>
    <property type="evidence" value="ECO:0007669"/>
    <property type="project" value="TreeGrafter"/>
</dbReference>
<dbReference type="GO" id="GO:0005938">
    <property type="term" value="C:cell cortex"/>
    <property type="evidence" value="ECO:0007669"/>
    <property type="project" value="UniProtKB-SubCell"/>
</dbReference>
<dbReference type="GO" id="GO:0043197">
    <property type="term" value="C:dendritic spine"/>
    <property type="evidence" value="ECO:0000250"/>
    <property type="project" value="UniProtKB"/>
</dbReference>
<dbReference type="GO" id="GO:0090443">
    <property type="term" value="C:FAR/SIN/STRIPAK complex"/>
    <property type="evidence" value="ECO:0000250"/>
    <property type="project" value="UniProtKB"/>
</dbReference>
<dbReference type="GO" id="GO:0051721">
    <property type="term" value="F:protein phosphatase 2A binding"/>
    <property type="evidence" value="ECO:0007669"/>
    <property type="project" value="TreeGrafter"/>
</dbReference>
<dbReference type="Gene3D" id="1.25.40.20">
    <property type="entry name" value="Ankyrin repeat-containing domain"/>
    <property type="match status" value="1"/>
</dbReference>
<dbReference type="InterPro" id="IPR002110">
    <property type="entry name" value="Ankyrin_rpt"/>
</dbReference>
<dbReference type="InterPro" id="IPR036770">
    <property type="entry name" value="Ankyrin_rpt-contain_sf"/>
</dbReference>
<dbReference type="InterPro" id="IPR050719">
    <property type="entry name" value="Cortactin-Actin_Reg"/>
</dbReference>
<dbReference type="InterPro" id="IPR019131">
    <property type="entry name" value="Cortactin-binding_p2_N"/>
</dbReference>
<dbReference type="PANTHER" id="PTHR23166:SF9">
    <property type="entry name" value="CTTNBP2 N-TERMINAL-LIKE PROTEIN"/>
    <property type="match status" value="1"/>
</dbReference>
<dbReference type="PANTHER" id="PTHR23166">
    <property type="entry name" value="FILAMIN/GPBP-INTERACTING PROTEIN"/>
    <property type="match status" value="1"/>
</dbReference>
<dbReference type="Pfam" id="PF25408">
    <property type="entry name" value="AAA_lid_NAV1"/>
    <property type="match status" value="1"/>
</dbReference>
<dbReference type="Pfam" id="PF00023">
    <property type="entry name" value="Ank"/>
    <property type="match status" value="2"/>
</dbReference>
<dbReference type="Pfam" id="PF12796">
    <property type="entry name" value="Ank_2"/>
    <property type="match status" value="1"/>
</dbReference>
<dbReference type="Pfam" id="PF09727">
    <property type="entry name" value="CortBP2"/>
    <property type="match status" value="1"/>
</dbReference>
<dbReference type="SMART" id="SM00248">
    <property type="entry name" value="ANK"/>
    <property type="match status" value="6"/>
</dbReference>
<dbReference type="SUPFAM" id="SSF48403">
    <property type="entry name" value="Ankyrin repeat"/>
    <property type="match status" value="1"/>
</dbReference>
<dbReference type="PROSITE" id="PS50297">
    <property type="entry name" value="ANK_REP_REGION"/>
    <property type="match status" value="1"/>
</dbReference>
<dbReference type="PROSITE" id="PS50088">
    <property type="entry name" value="ANK_REPEAT"/>
    <property type="match status" value="4"/>
</dbReference>
<proteinExistence type="inferred from homology"/>
<name>CTTB2_CHLAE</name>
<feature type="chain" id="PRO_0000260402" description="Cortactin-binding protein 2">
    <location>
        <begin position="1"/>
        <end position="1662"/>
    </location>
</feature>
<feature type="repeat" description="ANK 1">
    <location>
        <begin position="709"/>
        <end position="739"/>
    </location>
</feature>
<feature type="repeat" description="ANK 2">
    <location>
        <begin position="743"/>
        <end position="772"/>
    </location>
</feature>
<feature type="repeat" description="ANK 3">
    <location>
        <begin position="776"/>
        <end position="805"/>
    </location>
</feature>
<feature type="repeat" description="ANK 4">
    <location>
        <begin position="809"/>
        <end position="838"/>
    </location>
</feature>
<feature type="repeat" description="ANK 5">
    <location>
        <begin position="842"/>
        <end position="871"/>
    </location>
</feature>
<feature type="repeat" description="ANK 6">
    <location>
        <begin position="912"/>
        <end position="942"/>
    </location>
</feature>
<feature type="region of interest" description="Disordered" evidence="5">
    <location>
        <begin position="1"/>
        <end position="23"/>
    </location>
</feature>
<feature type="region of interest" description="Disordered" evidence="5">
    <location>
        <begin position="203"/>
        <end position="222"/>
    </location>
</feature>
<feature type="region of interest" description="Disordered" evidence="5">
    <location>
        <begin position="361"/>
        <end position="440"/>
    </location>
</feature>
<feature type="region of interest" description="Disordered" evidence="5">
    <location>
        <begin position="454"/>
        <end position="479"/>
    </location>
</feature>
<feature type="region of interest" description="Disordered" evidence="5">
    <location>
        <begin position="498"/>
        <end position="618"/>
    </location>
</feature>
<feature type="region of interest" description="Disordered" evidence="5">
    <location>
        <begin position="1450"/>
        <end position="1474"/>
    </location>
</feature>
<feature type="region of interest" description="Disordered" evidence="5">
    <location>
        <begin position="1580"/>
        <end position="1602"/>
    </location>
</feature>
<feature type="region of interest" description="Disordered" evidence="5">
    <location>
        <begin position="1618"/>
        <end position="1662"/>
    </location>
</feature>
<feature type="coiled-coil region" evidence="4">
    <location>
        <begin position="119"/>
        <end position="276"/>
    </location>
</feature>
<feature type="compositionally biased region" description="Low complexity" evidence="5">
    <location>
        <begin position="386"/>
        <end position="396"/>
    </location>
</feature>
<feature type="compositionally biased region" description="Polar residues" evidence="5">
    <location>
        <begin position="411"/>
        <end position="422"/>
    </location>
</feature>
<feature type="compositionally biased region" description="Polar residues" evidence="5">
    <location>
        <begin position="583"/>
        <end position="597"/>
    </location>
</feature>
<feature type="compositionally biased region" description="Polar residues" evidence="5">
    <location>
        <begin position="1582"/>
        <end position="1599"/>
    </location>
</feature>
<feature type="compositionally biased region" description="Low complexity" evidence="5">
    <location>
        <begin position="1624"/>
        <end position="1638"/>
    </location>
</feature>
<feature type="compositionally biased region" description="Polar residues" evidence="5">
    <location>
        <begin position="1639"/>
        <end position="1648"/>
    </location>
</feature>
<feature type="compositionally biased region" description="Basic and acidic residues" evidence="5">
    <location>
        <begin position="1649"/>
        <end position="1662"/>
    </location>
</feature>
<feature type="modified residue" description="Asymmetric dimethylarginine" evidence="1">
    <location>
        <position position="498"/>
    </location>
</feature>
<feature type="modified residue" description="Phosphoserine" evidence="3">
    <location>
        <position position="1524"/>
    </location>
</feature>
<comment type="function">
    <text evidence="2">Regulates the dendritic spine distribution of CTTN/cortactin in hippocampal neurons, and thus controls dendritic spinogenesis and dendritic spine maintenance. Associates with the striatin-interacting phosphatase and kinase (STRIPAK) core complex to regulate dendritic spine distribution of the STRIPAK complex in hippocampal neurons.</text>
</comment>
<comment type="subunit">
    <text evidence="2">Interacts with CTTN/cortactin SH3 domain. Interacts with STRN, STRN4/zinedin and MOB4/phocein; this interactions mediate the association with the STRIPAK core complex and may regulate dendritic spine distribution of the STRIPAK complex in hippocampal neurons. Activation of glutamate receptors weakens the interaction with STRN and STRN4.</text>
</comment>
<comment type="subcellular location">
    <subcellularLocation>
        <location evidence="1">Cytoplasm</location>
        <location evidence="1">Cell cortex</location>
    </subcellularLocation>
    <subcellularLocation>
        <location evidence="2">Cell projection</location>
        <location evidence="2">Dendritic spine</location>
    </subcellularLocation>
    <text evidence="2">Remains associated with dendritic spines even after glutamate stimulation.</text>
</comment>
<evidence type="ECO:0000250" key="1">
    <source>
        <dbReference type="UniProtKB" id="B9EJA2"/>
    </source>
</evidence>
<evidence type="ECO:0000250" key="2">
    <source>
        <dbReference type="UniProtKB" id="Q2IBD4"/>
    </source>
</evidence>
<evidence type="ECO:0000250" key="3">
    <source>
        <dbReference type="UniProtKB" id="Q8WZ74"/>
    </source>
</evidence>
<evidence type="ECO:0000255" key="4"/>
<evidence type="ECO:0000256" key="5">
    <source>
        <dbReference type="SAM" id="MobiDB-lite"/>
    </source>
</evidence>
<protein>
    <recommendedName>
        <fullName>Cortactin-binding protein 2</fullName>
        <shortName>CortBP2</shortName>
    </recommendedName>
</protein>